<accession>Q9PJC6</accession>
<feature type="chain" id="PRO_0000168266" description="Probable dihydroneopterin aldolase">
    <location>
        <begin position="1"/>
        <end position="122"/>
    </location>
</feature>
<feature type="active site" description="Proton donor/acceptor" evidence="2">
    <location>
        <position position="101"/>
    </location>
</feature>
<feature type="binding site" evidence="2">
    <location>
        <position position="21"/>
    </location>
    <ligand>
        <name>substrate</name>
    </ligand>
</feature>
<feature type="binding site" evidence="2">
    <location>
        <position position="54"/>
    </location>
    <ligand>
        <name>substrate</name>
    </ligand>
</feature>
<feature type="binding site" evidence="2">
    <location>
        <begin position="73"/>
        <end position="74"/>
    </location>
    <ligand>
        <name>substrate</name>
    </ligand>
</feature>
<reference key="1">
    <citation type="journal article" date="2000" name="Nucleic Acids Res.">
        <title>Genome sequences of Chlamydia trachomatis MoPn and Chlamydia pneumoniae AR39.</title>
        <authorList>
            <person name="Read T.D."/>
            <person name="Brunham R.C."/>
            <person name="Shen C."/>
            <person name="Gill S.R."/>
            <person name="Heidelberg J.F."/>
            <person name="White O."/>
            <person name="Hickey E.K."/>
            <person name="Peterson J.D."/>
            <person name="Utterback T.R."/>
            <person name="Berry K.J."/>
            <person name="Bass S."/>
            <person name="Linher K.D."/>
            <person name="Weidman J.F."/>
            <person name="Khouri H.M."/>
            <person name="Craven B."/>
            <person name="Bowman C."/>
            <person name="Dodson R.J."/>
            <person name="Gwinn M.L."/>
            <person name="Nelson W.C."/>
            <person name="DeBoy R.T."/>
            <person name="Kolonay J.F."/>
            <person name="McClarty G."/>
            <person name="Salzberg S.L."/>
            <person name="Eisen J.A."/>
            <person name="Fraser C.M."/>
        </authorList>
    </citation>
    <scope>NUCLEOTIDE SEQUENCE [LARGE SCALE GENOMIC DNA]</scope>
    <source>
        <strain>MoPn / Nigg</strain>
    </source>
</reference>
<name>FOLB_CHLMU</name>
<organism>
    <name type="scientific">Chlamydia muridarum (strain MoPn / Nigg)</name>
    <dbReference type="NCBI Taxonomy" id="243161"/>
    <lineage>
        <taxon>Bacteria</taxon>
        <taxon>Pseudomonadati</taxon>
        <taxon>Chlamydiota</taxon>
        <taxon>Chlamydiia</taxon>
        <taxon>Chlamydiales</taxon>
        <taxon>Chlamydiaceae</taxon>
        <taxon>Chlamydia/Chlamydophila group</taxon>
        <taxon>Chlamydia</taxon>
    </lineage>
</organism>
<gene>
    <name type="primary">folB</name>
    <name type="ordered locus">TC_0904</name>
</gene>
<keyword id="KW-0289">Folate biosynthesis</keyword>
<keyword id="KW-0456">Lyase</keyword>
<comment type="function">
    <text evidence="1">Catalyzes the conversion of 7,8-dihydroneopterin to 6-hydroxymethyl-7,8-dihydropterin.</text>
</comment>
<comment type="catalytic activity">
    <reaction>
        <text>7,8-dihydroneopterin = 6-hydroxymethyl-7,8-dihydropterin + glycolaldehyde</text>
        <dbReference type="Rhea" id="RHEA:10540"/>
        <dbReference type="ChEBI" id="CHEBI:17001"/>
        <dbReference type="ChEBI" id="CHEBI:17071"/>
        <dbReference type="ChEBI" id="CHEBI:44841"/>
        <dbReference type="EC" id="4.1.2.25"/>
    </reaction>
</comment>
<comment type="pathway">
    <text>Cofactor biosynthesis; tetrahydrofolate biosynthesis; 2-amino-4-hydroxy-6-hydroxymethyl-7,8-dihydropteridine diphosphate from 7,8-dihydroneopterin triphosphate: step 3/4.</text>
</comment>
<comment type="similarity">
    <text evidence="3">Belongs to the DHNA family.</text>
</comment>
<sequence length="122" mass="13770">MYRLDVTNFRVWVSIGVSEQERYHKQPILVSVSLVFREEPKVCSTDEISDGICYAALVSLIEQTAANHPCALLERLAKVLLEKLEESLAQFVCKIDLRVSKERPPIPNLLSPVSFSISKEVP</sequence>
<dbReference type="EC" id="4.1.2.25"/>
<dbReference type="EMBL" id="AE002160">
    <property type="protein sequence ID" value="AAF39697.1"/>
    <property type="molecule type" value="Genomic_DNA"/>
</dbReference>
<dbReference type="PIR" id="H81652">
    <property type="entry name" value="H81652"/>
</dbReference>
<dbReference type="RefSeq" id="WP_010231896.1">
    <property type="nucleotide sequence ID" value="NZ_CP063055.1"/>
</dbReference>
<dbReference type="SMR" id="Q9PJC6"/>
<dbReference type="GeneID" id="1246273"/>
<dbReference type="KEGG" id="cmu:TC_0904"/>
<dbReference type="eggNOG" id="COG1539">
    <property type="taxonomic scope" value="Bacteria"/>
</dbReference>
<dbReference type="HOGENOM" id="CLU_112632_3_0_0"/>
<dbReference type="OrthoDB" id="7161206at2"/>
<dbReference type="UniPathway" id="UPA00077">
    <property type="reaction ID" value="UER00154"/>
</dbReference>
<dbReference type="Proteomes" id="UP000000800">
    <property type="component" value="Chromosome"/>
</dbReference>
<dbReference type="GO" id="GO:0004150">
    <property type="term" value="F:dihydroneopterin aldolase activity"/>
    <property type="evidence" value="ECO:0007669"/>
    <property type="project" value="UniProtKB-EC"/>
</dbReference>
<dbReference type="GO" id="GO:0046656">
    <property type="term" value="P:folic acid biosynthetic process"/>
    <property type="evidence" value="ECO:0007669"/>
    <property type="project" value="UniProtKB-KW"/>
</dbReference>
<dbReference type="GO" id="GO:0046654">
    <property type="term" value="P:tetrahydrofolate biosynthetic process"/>
    <property type="evidence" value="ECO:0007669"/>
    <property type="project" value="UniProtKB-UniPathway"/>
</dbReference>
<dbReference type="CDD" id="cd00534">
    <property type="entry name" value="DHNA_DHNTPE"/>
    <property type="match status" value="1"/>
</dbReference>
<dbReference type="Gene3D" id="3.30.1130.10">
    <property type="match status" value="1"/>
</dbReference>
<dbReference type="InterPro" id="IPR006156">
    <property type="entry name" value="Dihydroneopterin_aldolase"/>
</dbReference>
<dbReference type="InterPro" id="IPR006157">
    <property type="entry name" value="FolB_dom"/>
</dbReference>
<dbReference type="InterPro" id="IPR043133">
    <property type="entry name" value="GTP-CH-I_C/QueF"/>
</dbReference>
<dbReference type="NCBIfam" id="TIGR00525">
    <property type="entry name" value="folB"/>
    <property type="match status" value="1"/>
</dbReference>
<dbReference type="NCBIfam" id="TIGR00526">
    <property type="entry name" value="folB_dom"/>
    <property type="match status" value="1"/>
</dbReference>
<dbReference type="Pfam" id="PF02152">
    <property type="entry name" value="FolB"/>
    <property type="match status" value="1"/>
</dbReference>
<dbReference type="SMART" id="SM00905">
    <property type="entry name" value="FolB"/>
    <property type="match status" value="1"/>
</dbReference>
<dbReference type="SUPFAM" id="SSF55620">
    <property type="entry name" value="Tetrahydrobiopterin biosynthesis enzymes-like"/>
    <property type="match status" value="1"/>
</dbReference>
<evidence type="ECO:0000250" key="1"/>
<evidence type="ECO:0000250" key="2">
    <source>
        <dbReference type="UniProtKB" id="P0AC16"/>
    </source>
</evidence>
<evidence type="ECO:0000305" key="3"/>
<protein>
    <recommendedName>
        <fullName>Probable dihydroneopterin aldolase</fullName>
        <shortName>DHNA</shortName>
        <ecNumber>4.1.2.25</ecNumber>
    </recommendedName>
    <alternativeName>
        <fullName>7,8-dihydroneopterin aldolase</fullName>
    </alternativeName>
</protein>
<proteinExistence type="inferred from homology"/>